<sequence length="195" mass="20019">MIASVRGEVIDIALDHAVIEAAGVGYKVMATPSTLATLRRGTEARLITAMIVREDSMTLYGFVDGDARDLFLTLLGVSGVGPKIALATLAVYDPQALRQALADGDVTALTRVPGIGKRGAERMVLELRDKIGPVSAGGGAAVGGHAIRGPVVEALVGLGFAAKQAEEATDKVLANDPEATTSSALRAALSMLGKK</sequence>
<reference key="1">
    <citation type="submission" date="2006-10" db="EMBL/GenBank/DDBJ databases">
        <authorList>
            <person name="Fleischmann R.D."/>
            <person name="Dodson R.J."/>
            <person name="Haft D.H."/>
            <person name="Merkel J.S."/>
            <person name="Nelson W.C."/>
            <person name="Fraser C.M."/>
        </authorList>
    </citation>
    <scope>NUCLEOTIDE SEQUENCE [LARGE SCALE GENOMIC DNA]</scope>
    <source>
        <strain>ATCC 700084 / mc(2)155</strain>
    </source>
</reference>
<reference key="2">
    <citation type="journal article" date="2007" name="Genome Biol.">
        <title>Interrupted coding sequences in Mycobacterium smegmatis: authentic mutations or sequencing errors?</title>
        <authorList>
            <person name="Deshayes C."/>
            <person name="Perrodou E."/>
            <person name="Gallien S."/>
            <person name="Euphrasie D."/>
            <person name="Schaeffer C."/>
            <person name="Van-Dorsselaer A."/>
            <person name="Poch O."/>
            <person name="Lecompte O."/>
            <person name="Reyrat J.-M."/>
        </authorList>
    </citation>
    <scope>NUCLEOTIDE SEQUENCE [LARGE SCALE GENOMIC DNA]</scope>
    <source>
        <strain>ATCC 700084 / mc(2)155</strain>
    </source>
</reference>
<reference key="3">
    <citation type="journal article" date="2009" name="Genome Res.">
        <title>Ortho-proteogenomics: multiple proteomes investigation through orthology and a new MS-based protocol.</title>
        <authorList>
            <person name="Gallien S."/>
            <person name="Perrodou E."/>
            <person name="Carapito C."/>
            <person name="Deshayes C."/>
            <person name="Reyrat J.-M."/>
            <person name="Van Dorsselaer A."/>
            <person name="Poch O."/>
            <person name="Schaeffer C."/>
            <person name="Lecompte O."/>
        </authorList>
    </citation>
    <scope>NUCLEOTIDE SEQUENCE [LARGE SCALE GENOMIC DNA]</scope>
    <scope>IDENTIFICATION BY MASS SPECTROMETRY [LARGE SCALE ANALYSIS]</scope>
    <scope>IDENTIFICATION OF N-TERMINUS</scope>
    <source>
        <strain>ATCC 700084 / mc(2)155</strain>
    </source>
</reference>
<evidence type="ECO:0000255" key="1">
    <source>
        <dbReference type="HAMAP-Rule" id="MF_00031"/>
    </source>
</evidence>
<comment type="function">
    <text evidence="1">The RuvA-RuvB-RuvC complex processes Holliday junction (HJ) DNA during genetic recombination and DNA repair, while the RuvA-RuvB complex plays an important role in the rescue of blocked DNA replication forks via replication fork reversal (RFR). RuvA specifically binds to HJ cruciform DNA, conferring on it an open structure. The RuvB hexamer acts as an ATP-dependent pump, pulling dsDNA into and through the RuvAB complex. HJ branch migration allows RuvC to scan DNA until it finds its consensus sequence, where it cleaves and resolves the cruciform DNA.</text>
</comment>
<comment type="subunit">
    <text evidence="1">Homotetramer. Forms an RuvA(8)-RuvB(12)-Holliday junction (HJ) complex. HJ DNA is sandwiched between 2 RuvA tetramers; dsDNA enters through RuvA and exits via RuvB. An RuvB hexamer assembles on each DNA strand where it exits the tetramer. Each RuvB hexamer is contacted by two RuvA subunits (via domain III) on 2 adjacent RuvB subunits; this complex drives branch migration. In the full resolvosome a probable DNA-RuvA(4)-RuvB(12)-RuvC(2) complex forms which resolves the HJ.</text>
</comment>
<comment type="subcellular location">
    <subcellularLocation>
        <location evidence="1">Cytoplasm</location>
    </subcellularLocation>
</comment>
<comment type="domain">
    <text evidence="1">Has three domains with a flexible linker between the domains II and III and assumes an 'L' shape. Domain III is highly mobile and contacts RuvB.</text>
</comment>
<comment type="similarity">
    <text evidence="1">Belongs to the RuvA family.</text>
</comment>
<proteinExistence type="evidence at protein level"/>
<dbReference type="EMBL" id="CP000480">
    <property type="protein sequence ID" value="ABK69898.1"/>
    <property type="molecule type" value="Genomic_DNA"/>
</dbReference>
<dbReference type="EMBL" id="CP001663">
    <property type="protein sequence ID" value="AFP39334.1"/>
    <property type="molecule type" value="Genomic_DNA"/>
</dbReference>
<dbReference type="RefSeq" id="WP_011728708.1">
    <property type="nucleotide sequence ID" value="NZ_SIJM01000002.1"/>
</dbReference>
<dbReference type="RefSeq" id="YP_887263.1">
    <property type="nucleotide sequence ID" value="NC_008596.1"/>
</dbReference>
<dbReference type="SMR" id="A0QWH5"/>
<dbReference type="STRING" id="246196.MSMEG_2944"/>
<dbReference type="PaxDb" id="246196-MSMEI_2870"/>
<dbReference type="GeneID" id="93457724"/>
<dbReference type="KEGG" id="msb:LJ00_14650"/>
<dbReference type="KEGG" id="msg:MSMEI_2870"/>
<dbReference type="KEGG" id="msm:MSMEG_2944"/>
<dbReference type="PATRIC" id="fig|246196.19.peg.2907"/>
<dbReference type="eggNOG" id="COG0632">
    <property type="taxonomic scope" value="Bacteria"/>
</dbReference>
<dbReference type="OrthoDB" id="5293449at2"/>
<dbReference type="Proteomes" id="UP000000757">
    <property type="component" value="Chromosome"/>
</dbReference>
<dbReference type="Proteomes" id="UP000006158">
    <property type="component" value="Chromosome"/>
</dbReference>
<dbReference type="GO" id="GO:0005737">
    <property type="term" value="C:cytoplasm"/>
    <property type="evidence" value="ECO:0007669"/>
    <property type="project" value="UniProtKB-SubCell"/>
</dbReference>
<dbReference type="GO" id="GO:0009379">
    <property type="term" value="C:Holliday junction helicase complex"/>
    <property type="evidence" value="ECO:0007669"/>
    <property type="project" value="InterPro"/>
</dbReference>
<dbReference type="GO" id="GO:0048476">
    <property type="term" value="C:Holliday junction resolvase complex"/>
    <property type="evidence" value="ECO:0007669"/>
    <property type="project" value="UniProtKB-UniRule"/>
</dbReference>
<dbReference type="GO" id="GO:0005524">
    <property type="term" value="F:ATP binding"/>
    <property type="evidence" value="ECO:0007669"/>
    <property type="project" value="InterPro"/>
</dbReference>
<dbReference type="GO" id="GO:0000400">
    <property type="term" value="F:four-way junction DNA binding"/>
    <property type="evidence" value="ECO:0007669"/>
    <property type="project" value="UniProtKB-UniRule"/>
</dbReference>
<dbReference type="GO" id="GO:0009378">
    <property type="term" value="F:four-way junction helicase activity"/>
    <property type="evidence" value="ECO:0007669"/>
    <property type="project" value="InterPro"/>
</dbReference>
<dbReference type="GO" id="GO:0006310">
    <property type="term" value="P:DNA recombination"/>
    <property type="evidence" value="ECO:0007669"/>
    <property type="project" value="UniProtKB-UniRule"/>
</dbReference>
<dbReference type="GO" id="GO:0006281">
    <property type="term" value="P:DNA repair"/>
    <property type="evidence" value="ECO:0007669"/>
    <property type="project" value="UniProtKB-UniRule"/>
</dbReference>
<dbReference type="CDD" id="cd14332">
    <property type="entry name" value="UBA_RuvA_C"/>
    <property type="match status" value="1"/>
</dbReference>
<dbReference type="FunFam" id="2.40.50.140:FF:000083">
    <property type="entry name" value="Holliday junction ATP-dependent DNA helicase RuvA"/>
    <property type="match status" value="1"/>
</dbReference>
<dbReference type="Gene3D" id="1.10.150.20">
    <property type="entry name" value="5' to 3' exonuclease, C-terminal subdomain"/>
    <property type="match status" value="1"/>
</dbReference>
<dbReference type="Gene3D" id="1.10.8.10">
    <property type="entry name" value="DNA helicase RuvA subunit, C-terminal domain"/>
    <property type="match status" value="1"/>
</dbReference>
<dbReference type="Gene3D" id="2.40.50.140">
    <property type="entry name" value="Nucleic acid-binding proteins"/>
    <property type="match status" value="1"/>
</dbReference>
<dbReference type="HAMAP" id="MF_00031">
    <property type="entry name" value="DNA_HJ_migration_RuvA"/>
    <property type="match status" value="1"/>
</dbReference>
<dbReference type="InterPro" id="IPR013849">
    <property type="entry name" value="DNA_helicase_Holl-junc_RuvA_I"/>
</dbReference>
<dbReference type="InterPro" id="IPR003583">
    <property type="entry name" value="Hlx-hairpin-Hlx_DNA-bd_motif"/>
</dbReference>
<dbReference type="InterPro" id="IPR012340">
    <property type="entry name" value="NA-bd_OB-fold"/>
</dbReference>
<dbReference type="InterPro" id="IPR000085">
    <property type="entry name" value="RuvA"/>
</dbReference>
<dbReference type="InterPro" id="IPR010994">
    <property type="entry name" value="RuvA_2-like"/>
</dbReference>
<dbReference type="InterPro" id="IPR011114">
    <property type="entry name" value="RuvA_C"/>
</dbReference>
<dbReference type="InterPro" id="IPR036267">
    <property type="entry name" value="RuvA_C_sf"/>
</dbReference>
<dbReference type="NCBIfam" id="TIGR00084">
    <property type="entry name" value="ruvA"/>
    <property type="match status" value="1"/>
</dbReference>
<dbReference type="Pfam" id="PF14520">
    <property type="entry name" value="HHH_5"/>
    <property type="match status" value="1"/>
</dbReference>
<dbReference type="Pfam" id="PF07499">
    <property type="entry name" value="RuvA_C"/>
    <property type="match status" value="1"/>
</dbReference>
<dbReference type="Pfam" id="PF01330">
    <property type="entry name" value="RuvA_N"/>
    <property type="match status" value="1"/>
</dbReference>
<dbReference type="SMART" id="SM00278">
    <property type="entry name" value="HhH1"/>
    <property type="match status" value="2"/>
</dbReference>
<dbReference type="SUPFAM" id="SSF46929">
    <property type="entry name" value="DNA helicase RuvA subunit, C-terminal domain"/>
    <property type="match status" value="1"/>
</dbReference>
<dbReference type="SUPFAM" id="SSF50249">
    <property type="entry name" value="Nucleic acid-binding proteins"/>
    <property type="match status" value="1"/>
</dbReference>
<dbReference type="SUPFAM" id="SSF47781">
    <property type="entry name" value="RuvA domain 2-like"/>
    <property type="match status" value="1"/>
</dbReference>
<feature type="chain" id="PRO_1000002489" description="Holliday junction branch migration complex subunit RuvA">
    <location>
        <begin position="1"/>
        <end position="195"/>
    </location>
</feature>
<feature type="region of interest" description="Domain I" evidence="1">
    <location>
        <begin position="1"/>
        <end position="63"/>
    </location>
</feature>
<feature type="region of interest" description="Domain II" evidence="1">
    <location>
        <begin position="64"/>
        <end position="142"/>
    </location>
</feature>
<feature type="region of interest" description="Flexible linker" evidence="1">
    <location>
        <begin position="143"/>
        <end position="150"/>
    </location>
</feature>
<feature type="region of interest" description="Domain III" evidence="1">
    <location>
        <begin position="150"/>
        <end position="195"/>
    </location>
</feature>
<keyword id="KW-0963">Cytoplasm</keyword>
<keyword id="KW-0227">DNA damage</keyword>
<keyword id="KW-0233">DNA recombination</keyword>
<keyword id="KW-0234">DNA repair</keyword>
<keyword id="KW-0238">DNA-binding</keyword>
<keyword id="KW-1185">Reference proteome</keyword>
<protein>
    <recommendedName>
        <fullName evidence="1">Holliday junction branch migration complex subunit RuvA</fullName>
    </recommendedName>
</protein>
<gene>
    <name evidence="1" type="primary">ruvA</name>
    <name type="ordered locus">MSMEG_2944</name>
    <name type="ordered locus">MSMEI_2870</name>
</gene>
<name>RUVA_MYCS2</name>
<accession>A0QWH5</accession>
<accession>I7G9Z2</accession>
<organism>
    <name type="scientific">Mycolicibacterium smegmatis (strain ATCC 700084 / mc(2)155)</name>
    <name type="common">Mycobacterium smegmatis</name>
    <dbReference type="NCBI Taxonomy" id="246196"/>
    <lineage>
        <taxon>Bacteria</taxon>
        <taxon>Bacillati</taxon>
        <taxon>Actinomycetota</taxon>
        <taxon>Actinomycetes</taxon>
        <taxon>Mycobacteriales</taxon>
        <taxon>Mycobacteriaceae</taxon>
        <taxon>Mycolicibacterium</taxon>
    </lineage>
</organism>